<keyword id="KW-0067">ATP-binding</keyword>
<keyword id="KW-0342">GTP-binding</keyword>
<keyword id="KW-0547">Nucleotide-binding</keyword>
<comment type="function">
    <text evidence="1">Displays ATPase and GTPase activities.</text>
</comment>
<comment type="similarity">
    <text evidence="1">Belongs to the RapZ-like family.</text>
</comment>
<evidence type="ECO:0000255" key="1">
    <source>
        <dbReference type="HAMAP-Rule" id="MF_00636"/>
    </source>
</evidence>
<proteinExistence type="inferred from homology"/>
<gene>
    <name type="ordered locus">SAB0719</name>
</gene>
<protein>
    <recommendedName>
        <fullName evidence="1">Nucleotide-binding protein SAB0719</fullName>
    </recommendedName>
</protein>
<feature type="chain" id="PRO_0000259003" description="Nucleotide-binding protein SAB0719">
    <location>
        <begin position="1"/>
        <end position="303"/>
    </location>
</feature>
<feature type="binding site" evidence="1">
    <location>
        <begin position="18"/>
        <end position="25"/>
    </location>
    <ligand>
        <name>ATP</name>
        <dbReference type="ChEBI" id="CHEBI:30616"/>
    </ligand>
</feature>
<feature type="binding site" evidence="1">
    <location>
        <begin position="69"/>
        <end position="72"/>
    </location>
    <ligand>
        <name>GTP</name>
        <dbReference type="ChEBI" id="CHEBI:37565"/>
    </ligand>
</feature>
<accession>Q2YSG2</accession>
<dbReference type="EMBL" id="AJ938182">
    <property type="protein sequence ID" value="CAI80407.1"/>
    <property type="molecule type" value="Genomic_DNA"/>
</dbReference>
<dbReference type="RefSeq" id="WP_000369715.1">
    <property type="nucleotide sequence ID" value="NC_007622.1"/>
</dbReference>
<dbReference type="SMR" id="Q2YSG2"/>
<dbReference type="KEGG" id="sab:SAB0719"/>
<dbReference type="HOGENOM" id="CLU_059558_0_0_9"/>
<dbReference type="GO" id="GO:0005524">
    <property type="term" value="F:ATP binding"/>
    <property type="evidence" value="ECO:0007669"/>
    <property type="project" value="UniProtKB-UniRule"/>
</dbReference>
<dbReference type="GO" id="GO:0005525">
    <property type="term" value="F:GTP binding"/>
    <property type="evidence" value="ECO:0007669"/>
    <property type="project" value="UniProtKB-UniRule"/>
</dbReference>
<dbReference type="Gene3D" id="3.40.50.300">
    <property type="entry name" value="P-loop containing nucleotide triphosphate hydrolases"/>
    <property type="match status" value="1"/>
</dbReference>
<dbReference type="HAMAP" id="MF_00636">
    <property type="entry name" value="RapZ_like"/>
    <property type="match status" value="1"/>
</dbReference>
<dbReference type="InterPro" id="IPR027417">
    <property type="entry name" value="P-loop_NTPase"/>
</dbReference>
<dbReference type="InterPro" id="IPR005337">
    <property type="entry name" value="RapZ-like"/>
</dbReference>
<dbReference type="InterPro" id="IPR053930">
    <property type="entry name" value="RapZ-like_N"/>
</dbReference>
<dbReference type="InterPro" id="IPR053931">
    <property type="entry name" value="RapZ_C"/>
</dbReference>
<dbReference type="NCBIfam" id="NF003828">
    <property type="entry name" value="PRK05416.1"/>
    <property type="match status" value="1"/>
</dbReference>
<dbReference type="PANTHER" id="PTHR30448">
    <property type="entry name" value="RNASE ADAPTER PROTEIN RAPZ"/>
    <property type="match status" value="1"/>
</dbReference>
<dbReference type="PANTHER" id="PTHR30448:SF0">
    <property type="entry name" value="RNASE ADAPTER PROTEIN RAPZ"/>
    <property type="match status" value="1"/>
</dbReference>
<dbReference type="Pfam" id="PF22740">
    <property type="entry name" value="PapZ_C"/>
    <property type="match status" value="1"/>
</dbReference>
<dbReference type="Pfam" id="PF03668">
    <property type="entry name" value="RapZ-like_N"/>
    <property type="match status" value="1"/>
</dbReference>
<dbReference type="PIRSF" id="PIRSF005052">
    <property type="entry name" value="P-loopkin"/>
    <property type="match status" value="1"/>
</dbReference>
<dbReference type="SUPFAM" id="SSF52540">
    <property type="entry name" value="P-loop containing nucleoside triphosphate hydrolases"/>
    <property type="match status" value="1"/>
</dbReference>
<sequence length="303" mass="34838">MDNNEKEKSKSELLVVTGLSGAGKSLVIQCLEDMGYFCVDNLPPVLLPKFVELMEQGNPSLRKVAIAIDLRGKELFNSLVAVVDKVKSEIDVIIDVMFLEASTEKLISRYKETRRAHPLMEQGKRSLINAINDEREHLSQIRSIANFVIDTTKLSPKELKERIRRYYEDEEFETFTINVTSFGFKHGIQMDADLVFDVRFLPNPYYVVDLRPLTGLDKDVYNYVMKWKETEIFFEKLTDLLDFMIPGYKKEGKSQLVIAIGCTGGQHRSVALAERLGNYLNEVFEYNVYVHHRDAHIESGEKK</sequence>
<reference key="1">
    <citation type="journal article" date="2007" name="PLoS ONE">
        <title>Molecular correlates of host specialization in Staphylococcus aureus.</title>
        <authorList>
            <person name="Herron-Olson L."/>
            <person name="Fitzgerald J.R."/>
            <person name="Musser J.M."/>
            <person name="Kapur V."/>
        </authorList>
    </citation>
    <scope>NUCLEOTIDE SEQUENCE [LARGE SCALE GENOMIC DNA]</scope>
    <source>
        <strain>bovine RF122 / ET3-1</strain>
    </source>
</reference>
<organism>
    <name type="scientific">Staphylococcus aureus (strain bovine RF122 / ET3-1)</name>
    <dbReference type="NCBI Taxonomy" id="273036"/>
    <lineage>
        <taxon>Bacteria</taxon>
        <taxon>Bacillati</taxon>
        <taxon>Bacillota</taxon>
        <taxon>Bacilli</taxon>
        <taxon>Bacillales</taxon>
        <taxon>Staphylococcaceae</taxon>
        <taxon>Staphylococcus</taxon>
    </lineage>
</organism>
<name>Y719_STAAB</name>